<keyword id="KW-0227">DNA damage</keyword>
<keyword id="KW-0233">DNA recombination</keyword>
<keyword id="KW-0234">DNA repair</keyword>
<keyword id="KW-0479">Metal-binding</keyword>
<keyword id="KW-0862">Zinc</keyword>
<keyword id="KW-0863">Zinc-finger</keyword>
<protein>
    <recommendedName>
        <fullName evidence="1">Recombination protein RecR</fullName>
    </recommendedName>
</protein>
<sequence length="200" mass="21871">MRTSHMLEQLMEALRCLPGVGPKSAQRMAFHLLQRDRKGGLQLADALSHAMTEIGHCNECRTFTEEDVCHICNNPKRQENGLLCVVESPADIAAVEATGQFSGRYFVLMGHLSPLDGIGPSDIGLDVLDYRLRRGDIKEVILATNPTVEGEATAHYIAELCREHKVDASRIAHGVPVGGELELVDGTTLSHSLLGRHKLN</sequence>
<gene>
    <name evidence="1" type="primary">recR</name>
    <name type="ordered locus">VV1_2005</name>
</gene>
<organism>
    <name type="scientific">Vibrio vulnificus (strain CMCP6)</name>
    <dbReference type="NCBI Taxonomy" id="216895"/>
    <lineage>
        <taxon>Bacteria</taxon>
        <taxon>Pseudomonadati</taxon>
        <taxon>Pseudomonadota</taxon>
        <taxon>Gammaproteobacteria</taxon>
        <taxon>Vibrionales</taxon>
        <taxon>Vibrionaceae</taxon>
        <taxon>Vibrio</taxon>
    </lineage>
</organism>
<feature type="chain" id="PRO_0000190423" description="Recombination protein RecR">
    <location>
        <begin position="1"/>
        <end position="200"/>
    </location>
</feature>
<feature type="domain" description="Toprim" evidence="1">
    <location>
        <begin position="81"/>
        <end position="176"/>
    </location>
</feature>
<feature type="zinc finger region" description="C4-type" evidence="1">
    <location>
        <begin position="57"/>
        <end position="72"/>
    </location>
</feature>
<dbReference type="EMBL" id="AE016795">
    <property type="protein sequence ID" value="AAO10402.1"/>
    <property type="molecule type" value="Genomic_DNA"/>
</dbReference>
<dbReference type="RefSeq" id="WP_011079901.1">
    <property type="nucleotide sequence ID" value="NC_004459.3"/>
</dbReference>
<dbReference type="SMR" id="Q8DB22"/>
<dbReference type="GeneID" id="93896224"/>
<dbReference type="KEGG" id="vvu:VV1_2005"/>
<dbReference type="HOGENOM" id="CLU_060739_1_2_6"/>
<dbReference type="Proteomes" id="UP000002275">
    <property type="component" value="Chromosome 1"/>
</dbReference>
<dbReference type="GO" id="GO:0003677">
    <property type="term" value="F:DNA binding"/>
    <property type="evidence" value="ECO:0007669"/>
    <property type="project" value="UniProtKB-UniRule"/>
</dbReference>
<dbReference type="GO" id="GO:0008270">
    <property type="term" value="F:zinc ion binding"/>
    <property type="evidence" value="ECO:0007669"/>
    <property type="project" value="UniProtKB-KW"/>
</dbReference>
<dbReference type="GO" id="GO:0006310">
    <property type="term" value="P:DNA recombination"/>
    <property type="evidence" value="ECO:0007669"/>
    <property type="project" value="UniProtKB-UniRule"/>
</dbReference>
<dbReference type="GO" id="GO:0006281">
    <property type="term" value="P:DNA repair"/>
    <property type="evidence" value="ECO:0007669"/>
    <property type="project" value="UniProtKB-UniRule"/>
</dbReference>
<dbReference type="CDD" id="cd01025">
    <property type="entry name" value="TOPRIM_recR"/>
    <property type="match status" value="1"/>
</dbReference>
<dbReference type="FunFam" id="1.10.8.420:FF:000001">
    <property type="entry name" value="Recombination protein RecR"/>
    <property type="match status" value="1"/>
</dbReference>
<dbReference type="FunFam" id="3.40.1360.10:FF:000001">
    <property type="entry name" value="Recombination protein RecR"/>
    <property type="match status" value="1"/>
</dbReference>
<dbReference type="Gene3D" id="3.40.1360.10">
    <property type="match status" value="1"/>
</dbReference>
<dbReference type="Gene3D" id="6.10.250.240">
    <property type="match status" value="1"/>
</dbReference>
<dbReference type="Gene3D" id="1.10.8.420">
    <property type="entry name" value="RecR Domain 1"/>
    <property type="match status" value="1"/>
</dbReference>
<dbReference type="HAMAP" id="MF_00017">
    <property type="entry name" value="RecR"/>
    <property type="match status" value="1"/>
</dbReference>
<dbReference type="InterPro" id="IPR000093">
    <property type="entry name" value="DNA_Rcmb_RecR"/>
</dbReference>
<dbReference type="InterPro" id="IPR023627">
    <property type="entry name" value="Rcmb_RecR"/>
</dbReference>
<dbReference type="InterPro" id="IPR015967">
    <property type="entry name" value="Rcmb_RecR_Znf"/>
</dbReference>
<dbReference type="InterPro" id="IPR006171">
    <property type="entry name" value="TOPRIM_dom"/>
</dbReference>
<dbReference type="InterPro" id="IPR034137">
    <property type="entry name" value="TOPRIM_RecR"/>
</dbReference>
<dbReference type="NCBIfam" id="TIGR00615">
    <property type="entry name" value="recR"/>
    <property type="match status" value="1"/>
</dbReference>
<dbReference type="PANTHER" id="PTHR30446">
    <property type="entry name" value="RECOMBINATION PROTEIN RECR"/>
    <property type="match status" value="1"/>
</dbReference>
<dbReference type="PANTHER" id="PTHR30446:SF0">
    <property type="entry name" value="RECOMBINATION PROTEIN RECR"/>
    <property type="match status" value="1"/>
</dbReference>
<dbReference type="Pfam" id="PF21175">
    <property type="entry name" value="RecR_C"/>
    <property type="match status" value="1"/>
</dbReference>
<dbReference type="Pfam" id="PF21176">
    <property type="entry name" value="RecR_HhH"/>
    <property type="match status" value="1"/>
</dbReference>
<dbReference type="Pfam" id="PF02132">
    <property type="entry name" value="RecR_ZnF"/>
    <property type="match status" value="1"/>
</dbReference>
<dbReference type="Pfam" id="PF13662">
    <property type="entry name" value="Toprim_4"/>
    <property type="match status" value="1"/>
</dbReference>
<dbReference type="SMART" id="SM00493">
    <property type="entry name" value="TOPRIM"/>
    <property type="match status" value="1"/>
</dbReference>
<dbReference type="SUPFAM" id="SSF111304">
    <property type="entry name" value="Recombination protein RecR"/>
    <property type="match status" value="1"/>
</dbReference>
<dbReference type="PROSITE" id="PS01300">
    <property type="entry name" value="RECR"/>
    <property type="match status" value="1"/>
</dbReference>
<dbReference type="PROSITE" id="PS50880">
    <property type="entry name" value="TOPRIM"/>
    <property type="match status" value="1"/>
</dbReference>
<reference key="1">
    <citation type="submission" date="2002-12" db="EMBL/GenBank/DDBJ databases">
        <title>Complete genome sequence of Vibrio vulnificus CMCP6.</title>
        <authorList>
            <person name="Rhee J.H."/>
            <person name="Kim S.Y."/>
            <person name="Chung S.S."/>
            <person name="Kim J.J."/>
            <person name="Moon Y.H."/>
            <person name="Jeong H."/>
            <person name="Choy H.E."/>
        </authorList>
    </citation>
    <scope>NUCLEOTIDE SEQUENCE [LARGE SCALE GENOMIC DNA]</scope>
    <source>
        <strain>CMCP6</strain>
    </source>
</reference>
<comment type="function">
    <text evidence="1">May play a role in DNA repair. It seems to be involved in an RecBC-independent recombinational process of DNA repair. It may act with RecF and RecO.</text>
</comment>
<comment type="similarity">
    <text evidence="1">Belongs to the RecR family.</text>
</comment>
<proteinExistence type="inferred from homology"/>
<evidence type="ECO:0000255" key="1">
    <source>
        <dbReference type="HAMAP-Rule" id="MF_00017"/>
    </source>
</evidence>
<name>RECR_VIBVU</name>
<accession>Q8DB22</accession>